<organism>
    <name type="scientific">Pyropia yezoensis</name>
    <name type="common">Susabi-nori</name>
    <name type="synonym">Porphyra yezoensis</name>
    <dbReference type="NCBI Taxonomy" id="2788"/>
    <lineage>
        <taxon>Eukaryota</taxon>
        <taxon>Rhodophyta</taxon>
        <taxon>Bangiophyceae</taxon>
        <taxon>Bangiales</taxon>
        <taxon>Bangiaceae</taxon>
        <taxon>Pyropia</taxon>
    </lineage>
</organism>
<geneLocation type="chloroplast"/>
<comment type="function">
    <text evidence="2">GTP hydrolase that promotes the GTP-dependent binding of aminoacyl-tRNA to the A-site of ribosomes during protein biosynthesis.</text>
</comment>
<comment type="catalytic activity">
    <reaction evidence="2">
        <text>GTP + H2O = GDP + phosphate + H(+)</text>
        <dbReference type="Rhea" id="RHEA:19669"/>
        <dbReference type="ChEBI" id="CHEBI:15377"/>
        <dbReference type="ChEBI" id="CHEBI:15378"/>
        <dbReference type="ChEBI" id="CHEBI:37565"/>
        <dbReference type="ChEBI" id="CHEBI:43474"/>
        <dbReference type="ChEBI" id="CHEBI:58189"/>
        <dbReference type="EC" id="3.6.5.3"/>
    </reaction>
    <physiologicalReaction direction="left-to-right" evidence="2">
        <dbReference type="Rhea" id="RHEA:19670"/>
    </physiologicalReaction>
</comment>
<comment type="subcellular location">
    <subcellularLocation>
        <location>Plastid</location>
        <location>Chloroplast</location>
    </subcellularLocation>
</comment>
<comment type="similarity">
    <text evidence="3">Belongs to the TRAFAC class translation factor GTPase superfamily. Classic translation factor GTPase family. EF-Tu/EF-1A subfamily.</text>
</comment>
<proteinExistence type="inferred from homology"/>
<name>EFTU_PYRYE</name>
<feature type="chain" id="PRO_0000275382" description="Elongation factor Tu, chloroplastic">
    <location>
        <begin position="1"/>
        <end position="409"/>
    </location>
</feature>
<feature type="domain" description="tr-type G">
    <location>
        <begin position="10"/>
        <end position="214"/>
    </location>
</feature>
<feature type="region of interest" description="G1" evidence="1">
    <location>
        <begin position="19"/>
        <end position="26"/>
    </location>
</feature>
<feature type="region of interest" description="G2" evidence="1">
    <location>
        <begin position="60"/>
        <end position="64"/>
    </location>
</feature>
<feature type="region of interest" description="G3" evidence="1">
    <location>
        <begin position="81"/>
        <end position="84"/>
    </location>
</feature>
<feature type="region of interest" description="G4" evidence="1">
    <location>
        <begin position="136"/>
        <end position="139"/>
    </location>
</feature>
<feature type="region of interest" description="G5" evidence="1">
    <location>
        <begin position="174"/>
        <end position="176"/>
    </location>
</feature>
<feature type="binding site" evidence="1">
    <location>
        <begin position="19"/>
        <end position="26"/>
    </location>
    <ligand>
        <name>GTP</name>
        <dbReference type="ChEBI" id="CHEBI:37565"/>
    </ligand>
</feature>
<feature type="binding site" evidence="2">
    <location>
        <position position="26"/>
    </location>
    <ligand>
        <name>Mg(2+)</name>
        <dbReference type="ChEBI" id="CHEBI:18420"/>
    </ligand>
</feature>
<feature type="binding site" evidence="1">
    <location>
        <begin position="81"/>
        <end position="85"/>
    </location>
    <ligand>
        <name>GTP</name>
        <dbReference type="ChEBI" id="CHEBI:37565"/>
    </ligand>
</feature>
<feature type="binding site" evidence="1">
    <location>
        <begin position="136"/>
        <end position="139"/>
    </location>
    <ligand>
        <name>GTP</name>
        <dbReference type="ChEBI" id="CHEBI:37565"/>
    </ligand>
</feature>
<feature type="sequence conflict" description="In Ref. 1; ABJ91304." evidence="3" ref="1">
    <original>I</original>
    <variation>T</variation>
    <location>
        <position position="188"/>
    </location>
</feature>
<sequence>MARSKFERKKPHVNIGTIGHVDHGKTTLTAAISATLSTLGSTAAKKFDEIDAAPEEKARGITINTAHVEYETDNRHYAHVDCPGHADYVKNMITGAAQMDGAILVVSAADGPMPQTREHILLAKQVGVPTLVVFLNKEDQVDDEELLELVELEGRELLSQYDFPGDDIPFVAGSALLALEAVTKNPAIKQGEDKWVDKIFSLMEAVDTYIPTPERDVDKTFLMAVEDVFSITGRGTVATGRIERGIIKVGDTIEIVGLRETRTTTITGLEMFQKTLEEGLAGDNIGILLRGVQKKDIERGMVLAKPGTITPHTQFEAEVYILTKEEGGRHTPFFPGYRPQFYVRTTDVTGTINQFTADDGTDAEMVMPGDRIKMTAELINAIAIEQGMRFAIREGGRTVGAGVVSKILK</sequence>
<dbReference type="EC" id="3.6.5.3" evidence="2"/>
<dbReference type="EMBL" id="DQ995189">
    <property type="protein sequence ID" value="ABJ91304.1"/>
    <property type="molecule type" value="Genomic_DNA"/>
</dbReference>
<dbReference type="EMBL" id="AP006715">
    <property type="protein sequence ID" value="BAE92410.1"/>
    <property type="molecule type" value="Genomic_DNA"/>
</dbReference>
<dbReference type="RefSeq" id="YP_536967.1">
    <property type="nucleotide sequence ID" value="NC_007932.1"/>
</dbReference>
<dbReference type="SMR" id="Q1XDK1"/>
<dbReference type="GeneID" id="3978990"/>
<dbReference type="GO" id="GO:0009507">
    <property type="term" value="C:chloroplast"/>
    <property type="evidence" value="ECO:0007669"/>
    <property type="project" value="UniProtKB-SubCell"/>
</dbReference>
<dbReference type="GO" id="GO:0005829">
    <property type="term" value="C:cytosol"/>
    <property type="evidence" value="ECO:0007669"/>
    <property type="project" value="TreeGrafter"/>
</dbReference>
<dbReference type="GO" id="GO:0005525">
    <property type="term" value="F:GTP binding"/>
    <property type="evidence" value="ECO:0007669"/>
    <property type="project" value="UniProtKB-UniRule"/>
</dbReference>
<dbReference type="GO" id="GO:0003924">
    <property type="term" value="F:GTPase activity"/>
    <property type="evidence" value="ECO:0007669"/>
    <property type="project" value="InterPro"/>
</dbReference>
<dbReference type="GO" id="GO:0003746">
    <property type="term" value="F:translation elongation factor activity"/>
    <property type="evidence" value="ECO:0007669"/>
    <property type="project" value="UniProtKB-UniRule"/>
</dbReference>
<dbReference type="CDD" id="cd01884">
    <property type="entry name" value="EF_Tu"/>
    <property type="match status" value="1"/>
</dbReference>
<dbReference type="CDD" id="cd03697">
    <property type="entry name" value="EFTU_II"/>
    <property type="match status" value="1"/>
</dbReference>
<dbReference type="CDD" id="cd03707">
    <property type="entry name" value="EFTU_III"/>
    <property type="match status" value="1"/>
</dbReference>
<dbReference type="FunFam" id="2.40.30.10:FF:000001">
    <property type="entry name" value="Elongation factor Tu"/>
    <property type="match status" value="1"/>
</dbReference>
<dbReference type="FunFam" id="2.40.30.10:FF:000046">
    <property type="entry name" value="Elongation factor Tu"/>
    <property type="match status" value="1"/>
</dbReference>
<dbReference type="FunFam" id="3.40.50.300:FF:000003">
    <property type="entry name" value="Elongation factor Tu"/>
    <property type="match status" value="1"/>
</dbReference>
<dbReference type="Gene3D" id="3.40.50.300">
    <property type="entry name" value="P-loop containing nucleotide triphosphate hydrolases"/>
    <property type="match status" value="1"/>
</dbReference>
<dbReference type="Gene3D" id="2.40.30.10">
    <property type="entry name" value="Translation factors"/>
    <property type="match status" value="2"/>
</dbReference>
<dbReference type="HAMAP" id="MF_00118_B">
    <property type="entry name" value="EF_Tu_B"/>
    <property type="match status" value="1"/>
</dbReference>
<dbReference type="InterPro" id="IPR041709">
    <property type="entry name" value="EF-Tu_GTP-bd"/>
</dbReference>
<dbReference type="InterPro" id="IPR050055">
    <property type="entry name" value="EF-Tu_GTPase"/>
</dbReference>
<dbReference type="InterPro" id="IPR004161">
    <property type="entry name" value="EFTu-like_2"/>
</dbReference>
<dbReference type="InterPro" id="IPR033720">
    <property type="entry name" value="EFTU_2"/>
</dbReference>
<dbReference type="InterPro" id="IPR031157">
    <property type="entry name" value="G_TR_CS"/>
</dbReference>
<dbReference type="InterPro" id="IPR027417">
    <property type="entry name" value="P-loop_NTPase"/>
</dbReference>
<dbReference type="InterPro" id="IPR005225">
    <property type="entry name" value="Small_GTP-bd"/>
</dbReference>
<dbReference type="InterPro" id="IPR000795">
    <property type="entry name" value="T_Tr_GTP-bd_dom"/>
</dbReference>
<dbReference type="InterPro" id="IPR009000">
    <property type="entry name" value="Transl_B-barrel_sf"/>
</dbReference>
<dbReference type="InterPro" id="IPR009001">
    <property type="entry name" value="Transl_elong_EF1A/Init_IF2_C"/>
</dbReference>
<dbReference type="InterPro" id="IPR004541">
    <property type="entry name" value="Transl_elong_EFTu/EF1A_bac/org"/>
</dbReference>
<dbReference type="InterPro" id="IPR004160">
    <property type="entry name" value="Transl_elong_EFTu/EF1A_C"/>
</dbReference>
<dbReference type="NCBIfam" id="TIGR00485">
    <property type="entry name" value="EF-Tu"/>
    <property type="match status" value="1"/>
</dbReference>
<dbReference type="NCBIfam" id="NF000766">
    <property type="entry name" value="PRK00049.1"/>
    <property type="match status" value="1"/>
</dbReference>
<dbReference type="NCBIfam" id="NF009372">
    <property type="entry name" value="PRK12735.1"/>
    <property type="match status" value="1"/>
</dbReference>
<dbReference type="NCBIfam" id="NF009373">
    <property type="entry name" value="PRK12736.1"/>
    <property type="match status" value="1"/>
</dbReference>
<dbReference type="NCBIfam" id="TIGR00231">
    <property type="entry name" value="small_GTP"/>
    <property type="match status" value="1"/>
</dbReference>
<dbReference type="PANTHER" id="PTHR43721:SF22">
    <property type="entry name" value="ELONGATION FACTOR TU, MITOCHONDRIAL"/>
    <property type="match status" value="1"/>
</dbReference>
<dbReference type="PANTHER" id="PTHR43721">
    <property type="entry name" value="ELONGATION FACTOR TU-RELATED"/>
    <property type="match status" value="1"/>
</dbReference>
<dbReference type="Pfam" id="PF00009">
    <property type="entry name" value="GTP_EFTU"/>
    <property type="match status" value="1"/>
</dbReference>
<dbReference type="Pfam" id="PF03144">
    <property type="entry name" value="GTP_EFTU_D2"/>
    <property type="match status" value="1"/>
</dbReference>
<dbReference type="Pfam" id="PF03143">
    <property type="entry name" value="GTP_EFTU_D3"/>
    <property type="match status" value="1"/>
</dbReference>
<dbReference type="PRINTS" id="PR00315">
    <property type="entry name" value="ELONGATNFCT"/>
</dbReference>
<dbReference type="SUPFAM" id="SSF50465">
    <property type="entry name" value="EF-Tu/eEF-1alpha/eIF2-gamma C-terminal domain"/>
    <property type="match status" value="1"/>
</dbReference>
<dbReference type="SUPFAM" id="SSF52540">
    <property type="entry name" value="P-loop containing nucleoside triphosphate hydrolases"/>
    <property type="match status" value="1"/>
</dbReference>
<dbReference type="SUPFAM" id="SSF50447">
    <property type="entry name" value="Translation proteins"/>
    <property type="match status" value="1"/>
</dbReference>
<dbReference type="PROSITE" id="PS00301">
    <property type="entry name" value="G_TR_1"/>
    <property type="match status" value="1"/>
</dbReference>
<dbReference type="PROSITE" id="PS51722">
    <property type="entry name" value="G_TR_2"/>
    <property type="match status" value="1"/>
</dbReference>
<keyword id="KW-0150">Chloroplast</keyword>
<keyword id="KW-0251">Elongation factor</keyword>
<keyword id="KW-0342">GTP-binding</keyword>
<keyword id="KW-0378">Hydrolase</keyword>
<keyword id="KW-0460">Magnesium</keyword>
<keyword id="KW-0479">Metal-binding</keyword>
<keyword id="KW-0547">Nucleotide-binding</keyword>
<keyword id="KW-0934">Plastid</keyword>
<keyword id="KW-0648">Protein biosynthesis</keyword>
<gene>
    <name type="primary">tufA</name>
</gene>
<evidence type="ECO:0000250" key="1"/>
<evidence type="ECO:0000255" key="2">
    <source>
        <dbReference type="HAMAP-Rule" id="MF_00118"/>
    </source>
</evidence>
<evidence type="ECO:0000305" key="3"/>
<reference key="1">
    <citation type="submission" date="2006-09" db="EMBL/GenBank/DDBJ databases">
        <title>Cloning and analysis of the Porphyra yezoensis gene for tufA.</title>
        <authorList>
            <person name="Wang M.Q."/>
            <person name="Mao Y.X."/>
        </authorList>
    </citation>
    <scope>NUCLEOTIDE SEQUENCE [GENOMIC DNA]</scope>
    <source>
        <strain>Qingdao</strain>
    </source>
</reference>
<reference key="2">
    <citation type="submission" date="2003-11" db="EMBL/GenBank/DDBJ databases">
        <title>Whole genome sequence of Porphyra yezoensis chloroplast.</title>
        <authorList>
            <person name="Kunimoto M."/>
            <person name="Morishima K."/>
            <person name="Yoshikawa M."/>
            <person name="Fukuda S."/>
            <person name="Kobayashi T."/>
            <person name="Kobayashi M."/>
            <person name="Okazaki T."/>
            <person name="Ohara I."/>
            <person name="Nakayama I."/>
        </authorList>
    </citation>
    <scope>NUCLEOTIDE SEQUENCE [LARGE SCALE GENOMIC DNA]</scope>
    <source>
        <strain>U-51</strain>
    </source>
</reference>
<protein>
    <recommendedName>
        <fullName>Elongation factor Tu, chloroplastic</fullName>
        <shortName>EF-Tu</shortName>
        <ecNumber evidence="2">3.6.5.3</ecNumber>
    </recommendedName>
</protein>
<accession>Q1XDK1</accession>
<accession>A0MM96</accession>